<reference key="1">
    <citation type="submission" date="2007-09" db="EMBL/GenBank/DDBJ databases">
        <title>Complete genome sequence of Rickettsia canadensis.</title>
        <authorList>
            <person name="Madan A."/>
            <person name="Fahey J."/>
            <person name="Helton E."/>
            <person name="Ketteman M."/>
            <person name="Madan A."/>
            <person name="Rodrigues S."/>
            <person name="Sanchez A."/>
            <person name="Whiting M."/>
            <person name="Dasch G."/>
            <person name="Eremeeva M."/>
        </authorList>
    </citation>
    <scope>NUCLEOTIDE SEQUENCE [LARGE SCALE GENOMIC DNA]</scope>
    <source>
        <strain>McKiel</strain>
    </source>
</reference>
<name>LSPA_RICCK</name>
<feature type="chain" id="PRO_1000038820" description="Lipoprotein signal peptidase">
    <location>
        <begin position="1"/>
        <end position="196"/>
    </location>
</feature>
<feature type="transmembrane region" description="Helical" evidence="1">
    <location>
        <begin position="43"/>
        <end position="63"/>
    </location>
</feature>
<feature type="transmembrane region" description="Helical" evidence="1">
    <location>
        <begin position="75"/>
        <end position="95"/>
    </location>
</feature>
<feature type="transmembrane region" description="Helical" evidence="1">
    <location>
        <begin position="100"/>
        <end position="120"/>
    </location>
</feature>
<feature type="transmembrane region" description="Helical" evidence="1">
    <location>
        <begin position="135"/>
        <end position="155"/>
    </location>
</feature>
<feature type="active site" evidence="1">
    <location>
        <position position="126"/>
    </location>
</feature>
<feature type="active site" evidence="1">
    <location>
        <position position="144"/>
    </location>
</feature>
<accession>A8EZ20</accession>
<evidence type="ECO:0000255" key="1">
    <source>
        <dbReference type="HAMAP-Rule" id="MF_00161"/>
    </source>
</evidence>
<organism>
    <name type="scientific">Rickettsia canadensis (strain McKiel)</name>
    <dbReference type="NCBI Taxonomy" id="293613"/>
    <lineage>
        <taxon>Bacteria</taxon>
        <taxon>Pseudomonadati</taxon>
        <taxon>Pseudomonadota</taxon>
        <taxon>Alphaproteobacteria</taxon>
        <taxon>Rickettsiales</taxon>
        <taxon>Rickettsiaceae</taxon>
        <taxon>Rickettsieae</taxon>
        <taxon>Rickettsia</taxon>
        <taxon>belli group</taxon>
    </lineage>
</organism>
<sequence>MLLLLKKIYLTFARSSRIIITLVIIDQLSKWWFIDNLRWKPGLMLKVTAFLNMVYTWNYGISFGLMREYYQYSNAVFILTNSIIVCYLYYLMVCSKTIRGFAGYSFVIGGAVGNLIDRLFRGAVFDFIHFYYKNYSFPVFNLADCFITIGVIILIEDYYSTKKIIEEKAKEHYDNAQIKAMAEKIRNTDHNGDNKI</sequence>
<gene>
    <name evidence="1" type="primary">lspA</name>
    <name type="ordered locus">A1E_03340</name>
</gene>
<comment type="function">
    <text evidence="1">This protein specifically catalyzes the removal of signal peptides from prolipoproteins.</text>
</comment>
<comment type="catalytic activity">
    <reaction evidence="1">
        <text>Release of signal peptides from bacterial membrane prolipoproteins. Hydrolyzes -Xaa-Yaa-Zaa-|-(S,diacylglyceryl)Cys-, in which Xaa is hydrophobic (preferably Leu), and Yaa (Ala or Ser) and Zaa (Gly or Ala) have small, neutral side chains.</text>
        <dbReference type="EC" id="3.4.23.36"/>
    </reaction>
</comment>
<comment type="pathway">
    <text evidence="1">Protein modification; lipoprotein biosynthesis (signal peptide cleavage).</text>
</comment>
<comment type="subcellular location">
    <subcellularLocation>
        <location evidence="1">Cell inner membrane</location>
        <topology evidence="1">Multi-pass membrane protein</topology>
    </subcellularLocation>
</comment>
<comment type="similarity">
    <text evidence="1">Belongs to the peptidase A8 family.</text>
</comment>
<proteinExistence type="inferred from homology"/>
<dbReference type="EC" id="3.4.23.36" evidence="1"/>
<dbReference type="EMBL" id="CP000409">
    <property type="protein sequence ID" value="ABV73603.1"/>
    <property type="molecule type" value="Genomic_DNA"/>
</dbReference>
<dbReference type="RefSeq" id="WP_012148798.1">
    <property type="nucleotide sequence ID" value="NC_009879.1"/>
</dbReference>
<dbReference type="SMR" id="A8EZ20"/>
<dbReference type="STRING" id="293613.A1E_03340"/>
<dbReference type="KEGG" id="rcm:A1E_03340"/>
<dbReference type="eggNOG" id="COG0597">
    <property type="taxonomic scope" value="Bacteria"/>
</dbReference>
<dbReference type="HOGENOM" id="CLU_083252_4_3_5"/>
<dbReference type="UniPathway" id="UPA00665"/>
<dbReference type="Proteomes" id="UP000007056">
    <property type="component" value="Chromosome"/>
</dbReference>
<dbReference type="GO" id="GO:0005886">
    <property type="term" value="C:plasma membrane"/>
    <property type="evidence" value="ECO:0007669"/>
    <property type="project" value="UniProtKB-SubCell"/>
</dbReference>
<dbReference type="GO" id="GO:0004190">
    <property type="term" value="F:aspartic-type endopeptidase activity"/>
    <property type="evidence" value="ECO:0007669"/>
    <property type="project" value="UniProtKB-UniRule"/>
</dbReference>
<dbReference type="GO" id="GO:0006508">
    <property type="term" value="P:proteolysis"/>
    <property type="evidence" value="ECO:0007669"/>
    <property type="project" value="UniProtKB-KW"/>
</dbReference>
<dbReference type="HAMAP" id="MF_00161">
    <property type="entry name" value="LspA"/>
    <property type="match status" value="1"/>
</dbReference>
<dbReference type="InterPro" id="IPR001872">
    <property type="entry name" value="Peptidase_A8"/>
</dbReference>
<dbReference type="NCBIfam" id="TIGR00077">
    <property type="entry name" value="lspA"/>
    <property type="match status" value="1"/>
</dbReference>
<dbReference type="PANTHER" id="PTHR33695">
    <property type="entry name" value="LIPOPROTEIN SIGNAL PEPTIDASE"/>
    <property type="match status" value="1"/>
</dbReference>
<dbReference type="PANTHER" id="PTHR33695:SF1">
    <property type="entry name" value="LIPOPROTEIN SIGNAL PEPTIDASE"/>
    <property type="match status" value="1"/>
</dbReference>
<dbReference type="Pfam" id="PF01252">
    <property type="entry name" value="Peptidase_A8"/>
    <property type="match status" value="1"/>
</dbReference>
<dbReference type="PRINTS" id="PR00781">
    <property type="entry name" value="LIPOSIGPTASE"/>
</dbReference>
<dbReference type="PROSITE" id="PS00855">
    <property type="entry name" value="SPASE_II"/>
    <property type="match status" value="1"/>
</dbReference>
<protein>
    <recommendedName>
        <fullName evidence="1">Lipoprotein signal peptidase</fullName>
        <ecNumber evidence="1">3.4.23.36</ecNumber>
    </recommendedName>
    <alternativeName>
        <fullName evidence="1">Prolipoprotein signal peptidase</fullName>
    </alternativeName>
    <alternativeName>
        <fullName evidence="1">Signal peptidase II</fullName>
        <shortName evidence="1">SPase II</shortName>
    </alternativeName>
</protein>
<keyword id="KW-0064">Aspartyl protease</keyword>
<keyword id="KW-0997">Cell inner membrane</keyword>
<keyword id="KW-1003">Cell membrane</keyword>
<keyword id="KW-0378">Hydrolase</keyword>
<keyword id="KW-0472">Membrane</keyword>
<keyword id="KW-0645">Protease</keyword>
<keyword id="KW-0812">Transmembrane</keyword>
<keyword id="KW-1133">Transmembrane helix</keyword>